<reference key="1">
    <citation type="journal article" date="1990" name="Virology">
        <title>The vaccinia virus HindIII F fragment: nucleotide sequence of the left 6.2 kb.</title>
        <authorList>
            <person name="Roseman N.A."/>
            <person name="Slabaugh M.B."/>
        </authorList>
    </citation>
    <scope>NUCLEOTIDE SEQUENCE [MRNA]</scope>
</reference>
<reference key="2">
    <citation type="submission" date="2003-02" db="EMBL/GenBank/DDBJ databases">
        <title>Sequencing of the coding region of Vaccinia-WR to an average 9-fold redundancy and an error rate of 0.16/10kb.</title>
        <authorList>
            <person name="Esposito J.J."/>
            <person name="Frace A.M."/>
            <person name="Sammons S.A."/>
            <person name="Olsen-Rasmussen M."/>
            <person name="Osborne J."/>
            <person name="Wohlhueter R."/>
        </authorList>
    </citation>
    <scope>NUCLEOTIDE SEQUENCE [LARGE SCALE GENOMIC DNA]</scope>
</reference>
<reference key="3">
    <citation type="journal article" date="2007" name="J. Gen. Virol.">
        <title>Vaccinia virus gene F3L encodes an intracellular protein that affects the innate immune response.</title>
        <authorList>
            <person name="Froggatt G.C."/>
            <person name="Smith G.L."/>
            <person name="Beard P.M."/>
        </authorList>
    </citation>
    <scope>FUNCTION</scope>
</reference>
<reference key="4">
    <citation type="journal article" date="2015" name="J. Virol.">
        <title>Deciphering poxvirus gene expression by RNA sequencing and ribosome profiling.</title>
        <authorList>
            <person name="Yang Z."/>
            <person name="Cao S."/>
            <person name="Martens C.A."/>
            <person name="Porcella S.F."/>
            <person name="Xie Z."/>
            <person name="Ma M."/>
            <person name="Shen B."/>
            <person name="Moss B."/>
        </authorList>
    </citation>
    <scope>INDUCTION</scope>
</reference>
<feature type="chain" id="PRO_0000119167" description="Immune evasion protein OPG047">
    <location>
        <begin position="1"/>
        <end position="480"/>
    </location>
</feature>
<feature type="domain" description="BTB" evidence="2">
    <location>
        <begin position="10"/>
        <end position="90"/>
    </location>
</feature>
<feature type="domain" description="BACK" evidence="1">
    <location>
        <begin position="125"/>
        <end position="223"/>
    </location>
</feature>
<feature type="repeat" description="Kelch 1" evidence="1">
    <location>
        <begin position="273"/>
        <end position="319"/>
    </location>
</feature>
<feature type="repeat" description="Kelch 2" evidence="1">
    <location>
        <begin position="320"/>
        <end position="363"/>
    </location>
</feature>
<feature type="repeat" description="Kelch 3" evidence="1">
    <location>
        <begin position="365"/>
        <end position="408"/>
    </location>
</feature>
<feature type="repeat" description="Kelch 4" evidence="1">
    <location>
        <begin position="410"/>
        <end position="447"/>
    </location>
</feature>
<feature type="repeat" description="Kelch 5" evidence="1">
    <location>
        <begin position="448"/>
        <end position="480"/>
    </location>
</feature>
<feature type="sequence conflict" description="In Ref. 2; AAO89321." evidence="5" ref="2">
    <original>W</original>
    <variation>R</variation>
    <location>
        <position position="64"/>
    </location>
</feature>
<evidence type="ECO:0000255" key="1"/>
<evidence type="ECO:0000255" key="2">
    <source>
        <dbReference type="PROSITE-ProRule" id="PRU00037"/>
    </source>
</evidence>
<evidence type="ECO:0000269" key="3">
    <source>
    </source>
</evidence>
<evidence type="ECO:0000269" key="4">
    <source>
    </source>
</evidence>
<evidence type="ECO:0000305" key="5"/>
<keyword id="KW-0244">Early protein</keyword>
<keyword id="KW-0880">Kelch repeat</keyword>
<keyword id="KW-1185">Reference proteome</keyword>
<keyword id="KW-0677">Repeat</keyword>
<proteinExistence type="evidence at transcript level"/>
<dbReference type="EMBL" id="M34368">
    <property type="protein sequence ID" value="AAA48245.1"/>
    <property type="molecule type" value="mRNA"/>
</dbReference>
<dbReference type="EMBL" id="AY243312">
    <property type="protein sequence ID" value="AAO89321.1"/>
    <property type="molecule type" value="Genomic_DNA"/>
</dbReference>
<dbReference type="PIR" id="G36213">
    <property type="entry name" value="G36213"/>
</dbReference>
<dbReference type="SMR" id="P24357"/>
<dbReference type="KEGG" id="vg:3707499"/>
<dbReference type="Proteomes" id="UP000000344">
    <property type="component" value="Genome"/>
</dbReference>
<dbReference type="Gene3D" id="1.25.40.420">
    <property type="match status" value="1"/>
</dbReference>
<dbReference type="Gene3D" id="2.120.10.80">
    <property type="entry name" value="Kelch-type beta propeller"/>
    <property type="match status" value="1"/>
</dbReference>
<dbReference type="Gene3D" id="3.30.710.10">
    <property type="entry name" value="Potassium Channel Kv1.1, Chain A"/>
    <property type="match status" value="1"/>
</dbReference>
<dbReference type="InterPro" id="IPR011705">
    <property type="entry name" value="BACK"/>
</dbReference>
<dbReference type="InterPro" id="IPR000210">
    <property type="entry name" value="BTB/POZ_dom"/>
</dbReference>
<dbReference type="InterPro" id="IPR015915">
    <property type="entry name" value="Kelch-typ_b-propeller"/>
</dbReference>
<dbReference type="InterPro" id="IPR006652">
    <property type="entry name" value="Kelch_1"/>
</dbReference>
<dbReference type="InterPro" id="IPR011333">
    <property type="entry name" value="SKP1/BTB/POZ_sf"/>
</dbReference>
<dbReference type="PANTHER" id="PTHR24412">
    <property type="entry name" value="KELCH PROTEIN"/>
    <property type="match status" value="1"/>
</dbReference>
<dbReference type="PANTHER" id="PTHR24412:SF489">
    <property type="entry name" value="RING FINGER DOMAIN AND KELCH REPEAT-CONTAINING PROTEIN DDB_G0271372"/>
    <property type="match status" value="1"/>
</dbReference>
<dbReference type="Pfam" id="PF07707">
    <property type="entry name" value="BACK"/>
    <property type="match status" value="1"/>
</dbReference>
<dbReference type="Pfam" id="PF00651">
    <property type="entry name" value="BTB"/>
    <property type="match status" value="1"/>
</dbReference>
<dbReference type="Pfam" id="PF01344">
    <property type="entry name" value="Kelch_1"/>
    <property type="match status" value="3"/>
</dbReference>
<dbReference type="PRINTS" id="PR00501">
    <property type="entry name" value="KELCHREPEAT"/>
</dbReference>
<dbReference type="SMART" id="SM00875">
    <property type="entry name" value="BACK"/>
    <property type="match status" value="1"/>
</dbReference>
<dbReference type="SMART" id="SM00612">
    <property type="entry name" value="Kelch"/>
    <property type="match status" value="3"/>
</dbReference>
<dbReference type="SUPFAM" id="SSF117281">
    <property type="entry name" value="Kelch motif"/>
    <property type="match status" value="1"/>
</dbReference>
<dbReference type="SUPFAM" id="SSF54695">
    <property type="entry name" value="POZ domain"/>
    <property type="match status" value="1"/>
</dbReference>
<dbReference type="PROSITE" id="PS50097">
    <property type="entry name" value="BTB"/>
    <property type="match status" value="1"/>
</dbReference>
<name>PG047_VACCW</name>
<organism>
    <name type="scientific">Vaccinia virus (strain Western Reserve)</name>
    <name type="common">VACV</name>
    <name type="synonym">Vaccinia virus (strain WR)</name>
    <dbReference type="NCBI Taxonomy" id="10254"/>
    <lineage>
        <taxon>Viruses</taxon>
        <taxon>Varidnaviria</taxon>
        <taxon>Bamfordvirae</taxon>
        <taxon>Nucleocytoviricota</taxon>
        <taxon>Pokkesviricetes</taxon>
        <taxon>Chitovirales</taxon>
        <taxon>Poxviridae</taxon>
        <taxon>Chordopoxvirinae</taxon>
        <taxon>Orthopoxvirus</taxon>
        <taxon>Vaccinia virus</taxon>
    </lineage>
</organism>
<sequence>MPIFVNTVYCKNILALSMTKKFKTIIDAIGGNIIVNSTILKKLSPYFRTHLRQKYTKNKDPVTWVCLDLDIHSLTSIVIYSYTGKVYIDSHNVVNLLRASILTSVEFIIYTCINFILRDFRKEYCVECYMMGIEYGLSNLLCHTKNFIAKHFLELEDDIIDNFDYLSMKLILESDELNVPDEDYVVDFVIKWYIKRRNKLGNLLLLIKNVIRSNYLSPRGINNVKWILDCTKIFHCDKQPRKSYKYPFIEYPMNMDQIIDIFHMCTSTHVGEVVYLIGGWMNNEIHNNAIAVNYISNNWIPIPPMNSPRLYASGIPANNKLYVVGGLPNPTSVERWFHGDAAWVNMPSLLKPRCNPAVASINNVIYVMGGHSETDTTTEYLLPNHDQWQFGPSTYYPHYKSCALVFGRRLFLVGRNAEFYCESSNTWTLIDDPIYPRDNPELIIVDNKLLLIGGFYRESYIDTIEVYNHHTYSWNIWDGK</sequence>
<accession>P24357</accession>
<accession>Q80HX9</accession>
<protein>
    <recommendedName>
        <fullName>Immune evasion protein OPG047</fullName>
    </recommendedName>
    <alternativeName>
        <fullName>Kelch repeat protein</fullName>
    </alternativeName>
</protein>
<gene>
    <name type="primary">OPG047</name>
    <name type="ordered locus">VACWR042</name>
    <name type="ORF">F3L</name>
</gene>
<comment type="function">
    <text evidence="3">Might have a role in the suppression of host immune response.</text>
</comment>
<comment type="induction">
    <text evidence="4">Expressed in the early phase of the viral replicative cycle.</text>
</comment>
<comment type="similarity">
    <text evidence="5">Belongs to the orthopoxvirus OPG047 family.</text>
</comment>
<organismHost>
    <name type="scientific">Bos taurus</name>
    <name type="common">Bovine</name>
    <dbReference type="NCBI Taxonomy" id="9913"/>
</organismHost>